<comment type="function">
    <text evidence="4">MFS-type transporter; part of the gene cluster that mediates the biosynthesis of UCS1025A, a member of the pyrrolizidinone family that acts as a strong telomerase inhibitor and displays potent antibacterial and antitumor properties (PubMed:29373009). These compounds share a hemiaminal-containing pyrrolizidinone core fused with a gamma-lactone, giving a furopyrrolizidine that is connected to a decalin fragment (PubMed:29373009).</text>
</comment>
<comment type="subcellular location">
    <subcellularLocation>
        <location evidence="1">Membrane</location>
        <topology evidence="1">Multi-pass membrane protein</topology>
    </subcellularLocation>
</comment>
<comment type="similarity">
    <text evidence="6">Belongs to the major facilitator superfamily.</text>
</comment>
<gene>
    <name evidence="5" type="primary">ucsD</name>
</gene>
<feature type="chain" id="PRO_0000450533" description="MFS-type transporter ucsD">
    <location>
        <begin position="1"/>
        <end position="586"/>
    </location>
</feature>
<feature type="transmembrane region" description="Helical" evidence="1">
    <location>
        <begin position="65"/>
        <end position="85"/>
    </location>
</feature>
<feature type="transmembrane region" description="Helical" evidence="1">
    <location>
        <begin position="101"/>
        <end position="121"/>
    </location>
</feature>
<feature type="transmembrane region" description="Helical" evidence="1">
    <location>
        <begin position="131"/>
        <end position="151"/>
    </location>
</feature>
<feature type="transmembrane region" description="Helical" evidence="1">
    <location>
        <begin position="164"/>
        <end position="184"/>
    </location>
</feature>
<feature type="transmembrane region" description="Helical" evidence="1">
    <location>
        <begin position="192"/>
        <end position="212"/>
    </location>
</feature>
<feature type="transmembrane region" description="Helical" evidence="1">
    <location>
        <begin position="220"/>
        <end position="240"/>
    </location>
</feature>
<feature type="transmembrane region" description="Helical" evidence="1">
    <location>
        <begin position="263"/>
        <end position="283"/>
    </location>
</feature>
<feature type="transmembrane region" description="Helical" evidence="1">
    <location>
        <begin position="290"/>
        <end position="310"/>
    </location>
</feature>
<feature type="transmembrane region" description="Helical" evidence="1">
    <location>
        <begin position="330"/>
        <end position="350"/>
    </location>
</feature>
<feature type="transmembrane region" description="Helical" evidence="1">
    <location>
        <begin position="368"/>
        <end position="388"/>
    </location>
</feature>
<feature type="transmembrane region" description="Helical" evidence="1">
    <location>
        <begin position="393"/>
        <end position="413"/>
    </location>
</feature>
<feature type="transmembrane region" description="Helical" evidence="1">
    <location>
        <begin position="420"/>
        <end position="440"/>
    </location>
</feature>
<feature type="transmembrane region" description="Helical" evidence="1">
    <location>
        <begin position="458"/>
        <end position="478"/>
    </location>
</feature>
<feature type="transmembrane region" description="Helical" evidence="1">
    <location>
        <begin position="532"/>
        <end position="552"/>
    </location>
</feature>
<feature type="region of interest" description="Disordered" evidence="3">
    <location>
        <begin position="1"/>
        <end position="56"/>
    </location>
</feature>
<feature type="compositionally biased region" description="Low complexity" evidence="3">
    <location>
        <begin position="19"/>
        <end position="36"/>
    </location>
</feature>
<feature type="compositionally biased region" description="Low complexity" evidence="3">
    <location>
        <begin position="46"/>
        <end position="56"/>
    </location>
</feature>
<feature type="glycosylation site" description="N-linked (GlcNAc...) asparagine" evidence="2">
    <location>
        <position position="25"/>
    </location>
</feature>
<feature type="glycosylation site" description="N-linked (GlcNAc...) asparagine" evidence="2">
    <location>
        <position position="31"/>
    </location>
</feature>
<feature type="glycosylation site" description="N-linked (GlcNAc...) asparagine" evidence="2">
    <location>
        <position position="324"/>
    </location>
</feature>
<sequence>MSRNSGTTLEDGPLHADPTTEAPNNATVTTNVTANDENTEKEVDADAAAAAPAEAPKPNQGFRFWAIVAALAFTALLSSLEGTIITSALPKITADLGGGNSFIWVPNGYFLATIVMLPLMAQASNLFGRRWLTLISVATFTLGSGICGGANSQAMLIGGRVVQGFGGGGIALMINIILTDLVPLRERGKYMGIVQMVSAVGAALGPFLGGLLTSKSTWRWVFYINLPIGGTSLVALFFFLRVAKPPPTTLAEKISRIDFSGNAIFIASTVSVLIGVTWGGAVYPWSSFRVIVPLVLGFFGLGLFVVYEWTVAKNPSLPKDIILNRTAATVLGVTFLHTVATYWSFYFMPIYFQAVKGETSFWSGVDTLPLFAGIFPFAILGGMLLAKFGRYKPMHLIGMAIITLSFGLFSLLDQGSSKAAWACFQLLFAVGAGLMIAILLPAMQAPLPESLVALSTGVWTFVRGFGTVWGVTIPSAIFNNQCRLKAADLSDQGVASHLNSGKAYQYATKDFLDSIHDDATRRQVVELFTSSLRTVWYVGVALAGFGWLLIWLEKEVTLRSKLNTKFGLEEKKKAAKADEDVESASA</sequence>
<name>UCSD_ACRSP</name>
<accession>A0A411KUX1</accession>
<reference key="1">
    <citation type="journal article" date="2018" name="J. Am. Chem. Soc.">
        <title>Genome mining and assembly-line biosynthesis of the UCS1025A pyrrolizidinone family of fungal alkaloids.</title>
        <authorList>
            <person name="Li L."/>
            <person name="Tang M.C."/>
            <person name="Tang S."/>
            <person name="Gao S."/>
            <person name="Soliman S."/>
            <person name="Hang L."/>
            <person name="Xu W."/>
            <person name="Ye T."/>
            <person name="Watanabe K."/>
            <person name="Tang Y."/>
        </authorList>
    </citation>
    <scope>NUCLEOTIDE SEQUENCE [GENOMIC DNA]</scope>
    <scope>FUNCTION</scope>
    <source>
        <strain>KY4917</strain>
    </source>
</reference>
<keyword id="KW-0325">Glycoprotein</keyword>
<keyword id="KW-0472">Membrane</keyword>
<keyword id="KW-0812">Transmembrane</keyword>
<keyword id="KW-1133">Transmembrane helix</keyword>
<keyword id="KW-0813">Transport</keyword>
<organism>
    <name type="scientific">Acremonium sp</name>
    <dbReference type="NCBI Taxonomy" id="2046025"/>
    <lineage>
        <taxon>Eukaryota</taxon>
        <taxon>Fungi</taxon>
        <taxon>Dikarya</taxon>
        <taxon>Ascomycota</taxon>
        <taxon>Pezizomycotina</taxon>
        <taxon>Sordariomycetes</taxon>
        <taxon>Hypocreomycetidae</taxon>
        <taxon>Hypocreales</taxon>
        <taxon>Hypocreales incertae sedis</taxon>
        <taxon>Acremonium</taxon>
    </lineage>
</organism>
<protein>
    <recommendedName>
        <fullName evidence="5">MFS-type transporter ucsD</fullName>
    </recommendedName>
    <alternativeName>
        <fullName evidence="5">UCS1025A pyrrolizidinone biosynthesis cluster protein D</fullName>
    </alternativeName>
</protein>
<evidence type="ECO:0000255" key="1"/>
<evidence type="ECO:0000255" key="2">
    <source>
        <dbReference type="PROSITE-ProRule" id="PRU00498"/>
    </source>
</evidence>
<evidence type="ECO:0000256" key="3">
    <source>
        <dbReference type="SAM" id="MobiDB-lite"/>
    </source>
</evidence>
<evidence type="ECO:0000269" key="4">
    <source>
    </source>
</evidence>
<evidence type="ECO:0000303" key="5">
    <source>
    </source>
</evidence>
<evidence type="ECO:0000305" key="6"/>
<proteinExistence type="inferred from homology"/>
<dbReference type="EMBL" id="MH375767">
    <property type="protein sequence ID" value="QBC88148.1"/>
    <property type="molecule type" value="Genomic_DNA"/>
</dbReference>
<dbReference type="SMR" id="A0A411KUX1"/>
<dbReference type="GlyCosmos" id="A0A411KUX1">
    <property type="glycosylation" value="3 sites, No reported glycans"/>
</dbReference>
<dbReference type="GO" id="GO:0005886">
    <property type="term" value="C:plasma membrane"/>
    <property type="evidence" value="ECO:0007669"/>
    <property type="project" value="TreeGrafter"/>
</dbReference>
<dbReference type="GO" id="GO:0022857">
    <property type="term" value="F:transmembrane transporter activity"/>
    <property type="evidence" value="ECO:0007669"/>
    <property type="project" value="InterPro"/>
</dbReference>
<dbReference type="CDD" id="cd17502">
    <property type="entry name" value="MFS_Azr1_MDR_like"/>
    <property type="match status" value="1"/>
</dbReference>
<dbReference type="Gene3D" id="1.20.1250.20">
    <property type="entry name" value="MFS general substrate transporter like domains"/>
    <property type="match status" value="1"/>
</dbReference>
<dbReference type="Gene3D" id="1.20.1720.10">
    <property type="entry name" value="Multidrug resistance protein D"/>
    <property type="match status" value="1"/>
</dbReference>
<dbReference type="InterPro" id="IPR011701">
    <property type="entry name" value="MFS"/>
</dbReference>
<dbReference type="InterPro" id="IPR020846">
    <property type="entry name" value="MFS_dom"/>
</dbReference>
<dbReference type="InterPro" id="IPR036259">
    <property type="entry name" value="MFS_trans_sf"/>
</dbReference>
<dbReference type="PANTHER" id="PTHR23501">
    <property type="entry name" value="MAJOR FACILITATOR SUPERFAMILY"/>
    <property type="match status" value="1"/>
</dbReference>
<dbReference type="PANTHER" id="PTHR23501:SF187">
    <property type="entry name" value="MAJOR FACILITATOR SUPERFAMILY (MFS) PROFILE DOMAIN-CONTAINING PROTEIN"/>
    <property type="match status" value="1"/>
</dbReference>
<dbReference type="Pfam" id="PF07690">
    <property type="entry name" value="MFS_1"/>
    <property type="match status" value="1"/>
</dbReference>
<dbReference type="SUPFAM" id="SSF103473">
    <property type="entry name" value="MFS general substrate transporter"/>
    <property type="match status" value="1"/>
</dbReference>
<dbReference type="PROSITE" id="PS50850">
    <property type="entry name" value="MFS"/>
    <property type="match status" value="1"/>
</dbReference>